<sequence length="106" mass="11563">MIPGEILPEDGEITLNAGRDTLTVEVTNTGDRPAQVGSHYHFYEVNDHLHFDREPTRGFRLDIAAGTAVRFEPGQSRTVQLVRYAGSGDIYGFQGRVMGPATGESA</sequence>
<reference key="1">
    <citation type="submission" date="2006-08" db="EMBL/GenBank/DDBJ databases">
        <title>Complete sequence of Alkalilimnicola ehrilichei MLHE-1.</title>
        <authorList>
            <person name="Copeland A."/>
            <person name="Lucas S."/>
            <person name="Lapidus A."/>
            <person name="Barry K."/>
            <person name="Detter J.C."/>
            <person name="Glavina del Rio T."/>
            <person name="Hammon N."/>
            <person name="Israni S."/>
            <person name="Dalin E."/>
            <person name="Tice H."/>
            <person name="Pitluck S."/>
            <person name="Sims D."/>
            <person name="Brettin T."/>
            <person name="Bruce D."/>
            <person name="Han C."/>
            <person name="Tapia R."/>
            <person name="Gilna P."/>
            <person name="Schmutz J."/>
            <person name="Larimer F."/>
            <person name="Land M."/>
            <person name="Hauser L."/>
            <person name="Kyrpides N."/>
            <person name="Mikhailova N."/>
            <person name="Oremland R.S."/>
            <person name="Hoeft S.E."/>
            <person name="Switzer-Blum J."/>
            <person name="Kulp T."/>
            <person name="King G."/>
            <person name="Tabita R."/>
            <person name="Witte B."/>
            <person name="Santini J.M."/>
            <person name="Basu P."/>
            <person name="Hollibaugh J.T."/>
            <person name="Xie G."/>
            <person name="Stolz J.F."/>
            <person name="Richardson P."/>
        </authorList>
    </citation>
    <scope>NUCLEOTIDE SEQUENCE [LARGE SCALE GENOMIC DNA]</scope>
    <source>
        <strain>ATCC BAA-1101 / DSM 17681 / MLHE-1</strain>
    </source>
</reference>
<comment type="catalytic activity">
    <reaction evidence="1">
        <text>urea + 2 H2O + H(+) = hydrogencarbonate + 2 NH4(+)</text>
        <dbReference type="Rhea" id="RHEA:20557"/>
        <dbReference type="ChEBI" id="CHEBI:15377"/>
        <dbReference type="ChEBI" id="CHEBI:15378"/>
        <dbReference type="ChEBI" id="CHEBI:16199"/>
        <dbReference type="ChEBI" id="CHEBI:17544"/>
        <dbReference type="ChEBI" id="CHEBI:28938"/>
        <dbReference type="EC" id="3.5.1.5"/>
    </reaction>
</comment>
<comment type="pathway">
    <text evidence="1">Nitrogen metabolism; urea degradation; CO(2) and NH(3) from urea (urease route): step 1/1.</text>
</comment>
<comment type="subunit">
    <text evidence="1">Heterotrimer of UreA (gamma), UreB (beta) and UreC (alpha) subunits. Three heterotrimers associate to form the active enzyme.</text>
</comment>
<comment type="subcellular location">
    <subcellularLocation>
        <location evidence="1">Cytoplasm</location>
    </subcellularLocation>
</comment>
<comment type="similarity">
    <text evidence="1">Belongs to the urease beta subunit family.</text>
</comment>
<organism>
    <name type="scientific">Alkalilimnicola ehrlichii (strain ATCC BAA-1101 / DSM 17681 / MLHE-1)</name>
    <dbReference type="NCBI Taxonomy" id="187272"/>
    <lineage>
        <taxon>Bacteria</taxon>
        <taxon>Pseudomonadati</taxon>
        <taxon>Pseudomonadota</taxon>
        <taxon>Gammaproteobacteria</taxon>
        <taxon>Chromatiales</taxon>
        <taxon>Ectothiorhodospiraceae</taxon>
        <taxon>Alkalilimnicola</taxon>
    </lineage>
</organism>
<dbReference type="EC" id="3.5.1.5" evidence="1"/>
<dbReference type="EMBL" id="CP000453">
    <property type="protein sequence ID" value="ABI55538.1"/>
    <property type="molecule type" value="Genomic_DNA"/>
</dbReference>
<dbReference type="RefSeq" id="WP_011627934.1">
    <property type="nucleotide sequence ID" value="NC_008340.1"/>
</dbReference>
<dbReference type="SMR" id="Q0AC99"/>
<dbReference type="KEGG" id="aeh:Mlg_0183"/>
<dbReference type="eggNOG" id="COG0832">
    <property type="taxonomic scope" value="Bacteria"/>
</dbReference>
<dbReference type="HOGENOM" id="CLU_129707_1_1_6"/>
<dbReference type="OrthoDB" id="9797217at2"/>
<dbReference type="UniPathway" id="UPA00258">
    <property type="reaction ID" value="UER00370"/>
</dbReference>
<dbReference type="Proteomes" id="UP000001962">
    <property type="component" value="Chromosome"/>
</dbReference>
<dbReference type="GO" id="GO:0035550">
    <property type="term" value="C:urease complex"/>
    <property type="evidence" value="ECO:0007669"/>
    <property type="project" value="InterPro"/>
</dbReference>
<dbReference type="GO" id="GO:0009039">
    <property type="term" value="F:urease activity"/>
    <property type="evidence" value="ECO:0007669"/>
    <property type="project" value="UniProtKB-UniRule"/>
</dbReference>
<dbReference type="GO" id="GO:0043419">
    <property type="term" value="P:urea catabolic process"/>
    <property type="evidence" value="ECO:0007669"/>
    <property type="project" value="UniProtKB-UniRule"/>
</dbReference>
<dbReference type="CDD" id="cd00407">
    <property type="entry name" value="Urease_beta"/>
    <property type="match status" value="1"/>
</dbReference>
<dbReference type="FunFam" id="2.10.150.10:FF:000001">
    <property type="entry name" value="Urease subunit beta"/>
    <property type="match status" value="1"/>
</dbReference>
<dbReference type="Gene3D" id="2.10.150.10">
    <property type="entry name" value="Urease, beta subunit"/>
    <property type="match status" value="1"/>
</dbReference>
<dbReference type="HAMAP" id="MF_01954">
    <property type="entry name" value="Urease_beta"/>
    <property type="match status" value="1"/>
</dbReference>
<dbReference type="InterPro" id="IPR002019">
    <property type="entry name" value="Urease_beta-like"/>
</dbReference>
<dbReference type="InterPro" id="IPR036461">
    <property type="entry name" value="Urease_betasu_sf"/>
</dbReference>
<dbReference type="InterPro" id="IPR050069">
    <property type="entry name" value="Urease_subunit"/>
</dbReference>
<dbReference type="NCBIfam" id="NF009682">
    <property type="entry name" value="PRK13203.1"/>
    <property type="match status" value="1"/>
</dbReference>
<dbReference type="NCBIfam" id="TIGR00192">
    <property type="entry name" value="urease_beta"/>
    <property type="match status" value="1"/>
</dbReference>
<dbReference type="PANTHER" id="PTHR33569">
    <property type="entry name" value="UREASE"/>
    <property type="match status" value="1"/>
</dbReference>
<dbReference type="PANTHER" id="PTHR33569:SF1">
    <property type="entry name" value="UREASE"/>
    <property type="match status" value="1"/>
</dbReference>
<dbReference type="Pfam" id="PF00699">
    <property type="entry name" value="Urease_beta"/>
    <property type="match status" value="1"/>
</dbReference>
<dbReference type="SUPFAM" id="SSF51278">
    <property type="entry name" value="Urease, beta-subunit"/>
    <property type="match status" value="1"/>
</dbReference>
<accession>Q0AC99</accession>
<gene>
    <name evidence="1" type="primary">ureB</name>
    <name type="ordered locus">Mlg_0183</name>
</gene>
<protein>
    <recommendedName>
        <fullName evidence="1">Urease subunit beta</fullName>
        <ecNumber evidence="1">3.5.1.5</ecNumber>
    </recommendedName>
    <alternativeName>
        <fullName evidence="1">Urea amidohydrolase subunit beta</fullName>
    </alternativeName>
</protein>
<proteinExistence type="inferred from homology"/>
<keyword id="KW-0963">Cytoplasm</keyword>
<keyword id="KW-0378">Hydrolase</keyword>
<keyword id="KW-1185">Reference proteome</keyword>
<evidence type="ECO:0000255" key="1">
    <source>
        <dbReference type="HAMAP-Rule" id="MF_01954"/>
    </source>
</evidence>
<name>URE2_ALKEH</name>
<feature type="chain" id="PRO_1000070712" description="Urease subunit beta">
    <location>
        <begin position="1"/>
        <end position="106"/>
    </location>
</feature>